<gene>
    <name type="primary">VPS70</name>
    <name type="ordered locus">YJR126C</name>
    <name type="ORF">J2050</name>
</gene>
<reference key="1">
    <citation type="journal article" date="1996" name="EMBO J.">
        <title>Complete nucleotide sequence of Saccharomyces cerevisiae chromosome X.</title>
        <authorList>
            <person name="Galibert F."/>
            <person name="Alexandraki D."/>
            <person name="Baur A."/>
            <person name="Boles E."/>
            <person name="Chalwatzis N."/>
            <person name="Chuat J.-C."/>
            <person name="Coster F."/>
            <person name="Cziepluch C."/>
            <person name="de Haan M."/>
            <person name="Domdey H."/>
            <person name="Durand P."/>
            <person name="Entian K.-D."/>
            <person name="Gatius M."/>
            <person name="Goffeau A."/>
            <person name="Grivell L.A."/>
            <person name="Hennemann A."/>
            <person name="Herbert C.J."/>
            <person name="Heumann K."/>
            <person name="Hilger F."/>
            <person name="Hollenberg C.P."/>
            <person name="Huang M.-E."/>
            <person name="Jacq C."/>
            <person name="Jauniaux J.-C."/>
            <person name="Katsoulou C."/>
            <person name="Kirchrath L."/>
            <person name="Kleine K."/>
            <person name="Kordes E."/>
            <person name="Koetter P."/>
            <person name="Liebl S."/>
            <person name="Louis E.J."/>
            <person name="Manus V."/>
            <person name="Mewes H.-W."/>
            <person name="Miosga T."/>
            <person name="Obermaier B."/>
            <person name="Perea J."/>
            <person name="Pohl T.M."/>
            <person name="Portetelle D."/>
            <person name="Pujol A."/>
            <person name="Purnelle B."/>
            <person name="Ramezani Rad M."/>
            <person name="Rasmussen S.W."/>
            <person name="Rose M."/>
            <person name="Rossau R."/>
            <person name="Schaaff-Gerstenschlaeger I."/>
            <person name="Smits P.H.M."/>
            <person name="Scarcez T."/>
            <person name="Soriano N."/>
            <person name="To Van D."/>
            <person name="Tzermia M."/>
            <person name="Van Broekhoven A."/>
            <person name="Vandenbol M."/>
            <person name="Wedler H."/>
            <person name="von Wettstein D."/>
            <person name="Wambutt R."/>
            <person name="Zagulski M."/>
            <person name="Zollner A."/>
            <person name="Karpfinger-Hartl L."/>
        </authorList>
    </citation>
    <scope>NUCLEOTIDE SEQUENCE [LARGE SCALE GENOMIC DNA]</scope>
    <source>
        <strain>ATCC 204508 / S288c</strain>
    </source>
</reference>
<reference key="2">
    <citation type="journal article" date="2014" name="G3 (Bethesda)">
        <title>The reference genome sequence of Saccharomyces cerevisiae: Then and now.</title>
        <authorList>
            <person name="Engel S.R."/>
            <person name="Dietrich F.S."/>
            <person name="Fisk D.G."/>
            <person name="Binkley G."/>
            <person name="Balakrishnan R."/>
            <person name="Costanzo M.C."/>
            <person name="Dwight S.S."/>
            <person name="Hitz B.C."/>
            <person name="Karra K."/>
            <person name="Nash R.S."/>
            <person name="Weng S."/>
            <person name="Wong E.D."/>
            <person name="Lloyd P."/>
            <person name="Skrzypek M.S."/>
            <person name="Miyasato S.R."/>
            <person name="Simison M."/>
            <person name="Cherry J.M."/>
        </authorList>
    </citation>
    <scope>GENOME REANNOTATION</scope>
    <source>
        <strain>ATCC 204508 / S288c</strain>
    </source>
</reference>
<reference key="3">
    <citation type="journal article" date="2002" name="Mol. Biol. Cell">
        <title>Genomic screen for vacuolar protein sorting genes in Saccharomyces cerevisiae.</title>
        <authorList>
            <person name="Bonangelino C.J."/>
            <person name="Chavez E.M."/>
            <person name="Bonifacino J.S."/>
        </authorList>
    </citation>
    <scope>FUNCTION</scope>
</reference>
<reference key="4">
    <citation type="journal article" date="2003" name="Nature">
        <title>Global analysis of protein expression in yeast.</title>
        <authorList>
            <person name="Ghaemmaghami S."/>
            <person name="Huh W.-K."/>
            <person name="Bower K."/>
            <person name="Howson R.W."/>
            <person name="Belle A."/>
            <person name="Dephoure N."/>
            <person name="O'Shea E.K."/>
            <person name="Weissman J.S."/>
        </authorList>
    </citation>
    <scope>LEVEL OF PROTEIN EXPRESSION [LARGE SCALE ANALYSIS]</scope>
</reference>
<organism>
    <name type="scientific">Saccharomyces cerevisiae (strain ATCC 204508 / S288c)</name>
    <name type="common">Baker's yeast</name>
    <dbReference type="NCBI Taxonomy" id="559292"/>
    <lineage>
        <taxon>Eukaryota</taxon>
        <taxon>Fungi</taxon>
        <taxon>Dikarya</taxon>
        <taxon>Ascomycota</taxon>
        <taxon>Saccharomycotina</taxon>
        <taxon>Saccharomycetes</taxon>
        <taxon>Saccharomycetales</taxon>
        <taxon>Saccharomycetaceae</taxon>
        <taxon>Saccharomyces</taxon>
    </lineage>
</organism>
<protein>
    <recommendedName>
        <fullName>Vacuolar protein sorting-associated protein 70</fullName>
        <ecNumber>3.4.-.-</ecNumber>
    </recommendedName>
</protein>
<dbReference type="EC" id="3.4.-.-"/>
<dbReference type="EMBL" id="Z49626">
    <property type="protein sequence ID" value="CAA89657.1"/>
    <property type="molecule type" value="Genomic_DNA"/>
</dbReference>
<dbReference type="EMBL" id="BK006943">
    <property type="protein sequence ID" value="DAA08911.1"/>
    <property type="molecule type" value="Genomic_DNA"/>
</dbReference>
<dbReference type="PIR" id="S57149">
    <property type="entry name" value="S57149"/>
</dbReference>
<dbReference type="RefSeq" id="NP_012660.1">
    <property type="nucleotide sequence ID" value="NM_001181784.1"/>
</dbReference>
<dbReference type="SMR" id="P47161"/>
<dbReference type="BioGRID" id="33882">
    <property type="interactions" value="68"/>
</dbReference>
<dbReference type="DIP" id="DIP-4989N"/>
<dbReference type="FunCoup" id="P47161">
    <property type="interactions" value="197"/>
</dbReference>
<dbReference type="IntAct" id="P47161">
    <property type="interactions" value="1"/>
</dbReference>
<dbReference type="STRING" id="4932.YJR126C"/>
<dbReference type="GlyCosmos" id="P47161">
    <property type="glycosylation" value="5 sites, No reported glycans"/>
</dbReference>
<dbReference type="GlyGen" id="P47161">
    <property type="glycosylation" value="5 sites"/>
</dbReference>
<dbReference type="iPTMnet" id="P47161"/>
<dbReference type="PaxDb" id="4932-YJR126C"/>
<dbReference type="PeptideAtlas" id="P47161"/>
<dbReference type="EnsemblFungi" id="YJR126C_mRNA">
    <property type="protein sequence ID" value="YJR126C"/>
    <property type="gene ID" value="YJR126C"/>
</dbReference>
<dbReference type="GeneID" id="853590"/>
<dbReference type="KEGG" id="sce:YJR126C"/>
<dbReference type="AGR" id="SGD:S000003887"/>
<dbReference type="SGD" id="S000003887">
    <property type="gene designation" value="VPS70"/>
</dbReference>
<dbReference type="VEuPathDB" id="FungiDB:YJR126C"/>
<dbReference type="eggNOG" id="KOG2195">
    <property type="taxonomic scope" value="Eukaryota"/>
</dbReference>
<dbReference type="GeneTree" id="ENSGT01030000234598"/>
<dbReference type="HOGENOM" id="CLU_005688_2_0_1"/>
<dbReference type="InParanoid" id="P47161"/>
<dbReference type="OMA" id="QGSTEWV"/>
<dbReference type="OrthoDB" id="5841748at2759"/>
<dbReference type="BioCyc" id="YEAST:G3O-31747-MONOMER"/>
<dbReference type="Reactome" id="R-SCE-8963693">
    <property type="pathway name" value="Aspartate and asparagine metabolism"/>
</dbReference>
<dbReference type="Reactome" id="R-SCE-8980692">
    <property type="pathway name" value="RHOA GTPase cycle"/>
</dbReference>
<dbReference type="Reactome" id="R-SCE-9013026">
    <property type="pathway name" value="RHOB GTPase cycle"/>
</dbReference>
<dbReference type="Reactome" id="R-SCE-9013106">
    <property type="pathway name" value="RHOC GTPase cycle"/>
</dbReference>
<dbReference type="Reactome" id="R-SCE-9013406">
    <property type="pathway name" value="RHOQ GTPase cycle"/>
</dbReference>
<dbReference type="Reactome" id="R-SCE-9696270">
    <property type="pathway name" value="RND2 GTPase cycle"/>
</dbReference>
<dbReference type="Reactome" id="R-SCE-9696273">
    <property type="pathway name" value="RND1 GTPase cycle"/>
</dbReference>
<dbReference type="BioGRID-ORCS" id="853590">
    <property type="hits" value="2 hits in 10 CRISPR screens"/>
</dbReference>
<dbReference type="PRO" id="PR:P47161"/>
<dbReference type="Proteomes" id="UP000002311">
    <property type="component" value="Chromosome X"/>
</dbReference>
<dbReference type="RNAct" id="P47161">
    <property type="molecule type" value="protein"/>
</dbReference>
<dbReference type="GO" id="GO:0005783">
    <property type="term" value="C:endoplasmic reticulum"/>
    <property type="evidence" value="ECO:0007005"/>
    <property type="project" value="SGD"/>
</dbReference>
<dbReference type="GO" id="GO:0016020">
    <property type="term" value="C:membrane"/>
    <property type="evidence" value="ECO:0007669"/>
    <property type="project" value="UniProtKB-SubCell"/>
</dbReference>
<dbReference type="GO" id="GO:0004177">
    <property type="term" value="F:aminopeptidase activity"/>
    <property type="evidence" value="ECO:0007669"/>
    <property type="project" value="UniProtKB-KW"/>
</dbReference>
<dbReference type="GO" id="GO:0004180">
    <property type="term" value="F:carboxypeptidase activity"/>
    <property type="evidence" value="ECO:0000318"/>
    <property type="project" value="GO_Central"/>
</dbReference>
<dbReference type="GO" id="GO:0046872">
    <property type="term" value="F:metal ion binding"/>
    <property type="evidence" value="ECO:0007669"/>
    <property type="project" value="UniProtKB-KW"/>
</dbReference>
<dbReference type="GO" id="GO:0008237">
    <property type="term" value="F:metallopeptidase activity"/>
    <property type="evidence" value="ECO:0007669"/>
    <property type="project" value="UniProtKB-KW"/>
</dbReference>
<dbReference type="GO" id="GO:0006623">
    <property type="term" value="P:protein targeting to vacuole"/>
    <property type="evidence" value="ECO:0007001"/>
    <property type="project" value="SGD"/>
</dbReference>
<dbReference type="GO" id="GO:0006508">
    <property type="term" value="P:proteolysis"/>
    <property type="evidence" value="ECO:0007669"/>
    <property type="project" value="UniProtKB-KW"/>
</dbReference>
<dbReference type="CDD" id="cd03874">
    <property type="entry name" value="M28_PMSA_TfR_like"/>
    <property type="match status" value="1"/>
</dbReference>
<dbReference type="CDD" id="cd02121">
    <property type="entry name" value="PA_GCPII_like"/>
    <property type="match status" value="1"/>
</dbReference>
<dbReference type="FunFam" id="3.40.630.10:FF:000101">
    <property type="entry name" value="N-acetylated alpha-linked acidic dipeptidase like 1"/>
    <property type="match status" value="1"/>
</dbReference>
<dbReference type="Gene3D" id="3.50.30.30">
    <property type="match status" value="1"/>
</dbReference>
<dbReference type="Gene3D" id="1.20.930.40">
    <property type="entry name" value="Transferrin receptor-like, dimerisation domain"/>
    <property type="match status" value="1"/>
</dbReference>
<dbReference type="Gene3D" id="3.40.630.10">
    <property type="entry name" value="Zn peptidases"/>
    <property type="match status" value="1"/>
</dbReference>
<dbReference type="InterPro" id="IPR046450">
    <property type="entry name" value="PA_dom_sf"/>
</dbReference>
<dbReference type="InterPro" id="IPR007484">
    <property type="entry name" value="Peptidase_M28"/>
</dbReference>
<dbReference type="InterPro" id="IPR039373">
    <property type="entry name" value="Peptidase_M28B"/>
</dbReference>
<dbReference type="InterPro" id="IPR007365">
    <property type="entry name" value="TFR-like_dimer_dom"/>
</dbReference>
<dbReference type="InterPro" id="IPR036757">
    <property type="entry name" value="TFR-like_dimer_dom_sf"/>
</dbReference>
<dbReference type="PANTHER" id="PTHR10404">
    <property type="entry name" value="N-ACETYLATED-ALPHA-LINKED ACIDIC DIPEPTIDASE"/>
    <property type="match status" value="1"/>
</dbReference>
<dbReference type="PANTHER" id="PTHR10404:SF46">
    <property type="entry name" value="VACUOLAR PROTEIN SORTING-ASSOCIATED PROTEIN 70"/>
    <property type="match status" value="1"/>
</dbReference>
<dbReference type="Pfam" id="PF04389">
    <property type="entry name" value="Peptidase_M28"/>
    <property type="match status" value="1"/>
</dbReference>
<dbReference type="Pfam" id="PF04253">
    <property type="entry name" value="TFR_dimer"/>
    <property type="match status" value="1"/>
</dbReference>
<dbReference type="SUPFAM" id="SSF52025">
    <property type="entry name" value="PA domain"/>
    <property type="match status" value="1"/>
</dbReference>
<dbReference type="SUPFAM" id="SSF47672">
    <property type="entry name" value="Transferrin receptor-like dimerisation domain"/>
    <property type="match status" value="1"/>
</dbReference>
<dbReference type="SUPFAM" id="SSF53187">
    <property type="entry name" value="Zn-dependent exopeptidases"/>
    <property type="match status" value="1"/>
</dbReference>
<proteinExistence type="evidence at protein level"/>
<feature type="chain" id="PRO_0000174138" description="Vacuolar protein sorting-associated protein 70">
    <location>
        <begin position="1"/>
        <end position="811"/>
    </location>
</feature>
<feature type="transmembrane region" description="Helical" evidence="2">
    <location>
        <begin position="90"/>
        <end position="110"/>
    </location>
</feature>
<feature type="region of interest" description="Disordered" evidence="3">
    <location>
        <begin position="1"/>
        <end position="63"/>
    </location>
</feature>
<feature type="region of interest" description="Disordered" evidence="3">
    <location>
        <begin position="334"/>
        <end position="367"/>
    </location>
</feature>
<feature type="compositionally biased region" description="Basic and acidic residues" evidence="3">
    <location>
        <begin position="1"/>
        <end position="21"/>
    </location>
</feature>
<feature type="compositionally biased region" description="Low complexity" evidence="3">
    <location>
        <begin position="336"/>
        <end position="345"/>
    </location>
</feature>
<feature type="binding site" evidence="1">
    <location>
        <position position="445"/>
    </location>
    <ligand>
        <name>Zn(2+)</name>
        <dbReference type="ChEBI" id="CHEBI:29105"/>
        <label>2</label>
    </ligand>
</feature>
<feature type="binding site" evidence="1">
    <location>
        <position position="456"/>
    </location>
    <ligand>
        <name>Zn(2+)</name>
        <dbReference type="ChEBI" id="CHEBI:29105"/>
        <label>1</label>
    </ligand>
</feature>
<feature type="binding site" evidence="1">
    <location>
        <position position="456"/>
    </location>
    <ligand>
        <name>Zn(2+)</name>
        <dbReference type="ChEBI" id="CHEBI:29105"/>
        <label>2</label>
    </ligand>
</feature>
<feature type="binding site" evidence="1">
    <location>
        <position position="522"/>
    </location>
    <ligand>
        <name>Zn(2+)</name>
        <dbReference type="ChEBI" id="CHEBI:29105"/>
        <label>2</label>
    </ligand>
</feature>
<feature type="binding site" evidence="1">
    <location>
        <position position="607"/>
    </location>
    <ligand>
        <name>Zn(2+)</name>
        <dbReference type="ChEBI" id="CHEBI:29105"/>
        <label>1</label>
    </ligand>
</feature>
<feature type="glycosylation site" description="N-linked (GlcNAc...) asparagine" evidence="2">
    <location>
        <position position="55"/>
    </location>
</feature>
<feature type="glycosylation site" description="N-linked (GlcNAc...) asparagine" evidence="2">
    <location>
        <position position="237"/>
    </location>
</feature>
<feature type="glycosylation site" description="N-linked (GlcNAc...) asparagine" evidence="2">
    <location>
        <position position="568"/>
    </location>
</feature>
<feature type="glycosylation site" description="N-linked (GlcNAc...) asparagine" evidence="2">
    <location>
        <position position="599"/>
    </location>
</feature>
<feature type="glycosylation site" description="N-linked (GlcNAc...) asparagine" evidence="2">
    <location>
        <position position="670"/>
    </location>
</feature>
<keyword id="KW-0031">Aminopeptidase</keyword>
<keyword id="KW-0325">Glycoprotein</keyword>
<keyword id="KW-0378">Hydrolase</keyword>
<keyword id="KW-0472">Membrane</keyword>
<keyword id="KW-0479">Metal-binding</keyword>
<keyword id="KW-0482">Metalloprotease</keyword>
<keyword id="KW-0645">Protease</keyword>
<keyword id="KW-0653">Protein transport</keyword>
<keyword id="KW-1185">Reference proteome</keyword>
<keyword id="KW-0812">Transmembrane</keyword>
<keyword id="KW-1133">Transmembrane helix</keyword>
<keyword id="KW-0813">Transport</keyword>
<keyword id="KW-0862">Zinc</keyword>
<evidence type="ECO:0000250" key="1"/>
<evidence type="ECO:0000255" key="2"/>
<evidence type="ECO:0000256" key="3">
    <source>
        <dbReference type="SAM" id="MobiDB-lite"/>
    </source>
</evidence>
<evidence type="ECO:0000269" key="4">
    <source>
    </source>
</evidence>
<evidence type="ECO:0000269" key="5">
    <source>
    </source>
</evidence>
<evidence type="ECO:0000305" key="6"/>
<accession>P47161</accession>
<accession>D6VWU5</accession>
<name>VPS70_YEAST</name>
<sequence length="811" mass="92018">MRMIQRERKREKEEGQLKERTVVNMADPDDNEAEATGLQQYSGETTRDDNEESMNDSFTLTSRNRGRSNTISSIVSGYEIMKEHMDKEKFMYLILASLLLYMGFVAAFAPRTSLSRDFRRFHSSRLTNAEVYRIYLNSLQQENRAKEHVYKYAGYMSNGASDSSTFKYTLDEFLDMGYKPKVEKYYPWIGEPVDTNVAPLENGKVVYEASMIEDRVKGDPASHARKRQKGFHQYSKNGSVTARYVFCNYGSISDYKLLLKKNIDIEDKIHIVRSGKILPGLKVKNAELYGASSVIIYTDPFDDGKVTEENGFLHYPYGPARNPSYIRRDSVNYFSDTPGDPTTPGYPSKDSDTEHMSPVGRVPRIPSVPMSARDVQPILERLNGRGFQIGPGSNIKDFGSFTGPSSSIDKVHLHNELTYNIKEMSSVEVSIPGIFTEGEIIIGAHRDSLASSSAGDANSGSAILLEIARGMSKLLKHGWKPLRPIKLISWDGERSGLLGSTDYAEAHAAILRRRALVYLNLDNAISGTNFHCKANPLLQDVIYEAAKLTEFNGHEDWSLFDHWKYTSNATISLLDGLSSYTSFQYHLGVPAAHFQFNANDTSGAVYHSNSVFDSPTWLEKFTNSDYKLHNTMAMFVGLTTLMLSENELARFNTHVYLKKIYNWYIAWHSNLSSAFPQDDEVNSLAKRVLDLLKVATQEDSIQFDQQNGILYKECREALPVWAFYKKIKSYIKLQRSNSKSKQIDQLFITHRGLKDREWMKYSLLAPSKFEGSVGEVLPGLHEGLADIDRNEVIQWLTILLSQFSNVRYLLQ</sequence>
<comment type="function">
    <text evidence="4">Involved in vacuolar protein sorting.</text>
</comment>
<comment type="cofactor">
    <cofactor evidence="1">
        <name>Zn(2+)</name>
        <dbReference type="ChEBI" id="CHEBI:29105"/>
    </cofactor>
    <text evidence="1">Binds 2 Zn(2+) ions per subunit.</text>
</comment>
<comment type="subcellular location">
    <subcellularLocation>
        <location evidence="6">Membrane</location>
        <topology evidence="6">Single-pass membrane protein</topology>
    </subcellularLocation>
</comment>
<comment type="miscellaneous">
    <text evidence="5">Present with 112 molecules/cell in log phase SD medium.</text>
</comment>
<comment type="similarity">
    <text evidence="6">Belongs to the peptidase M28 family. M28B subfamily.</text>
</comment>